<keyword id="KW-0030">Aminoacyl-tRNA synthetase</keyword>
<keyword id="KW-0067">ATP-binding</keyword>
<keyword id="KW-0175">Coiled coil</keyword>
<keyword id="KW-0963">Cytoplasm</keyword>
<keyword id="KW-0436">Ligase</keyword>
<keyword id="KW-0547">Nucleotide-binding</keyword>
<keyword id="KW-0648">Protein biosynthesis</keyword>
<keyword id="KW-1185">Reference proteome</keyword>
<sequence length="887" mass="103049">MNELDKNYSPNEIEEKWYKIWEDSKYFAASLSSEKENYSIVIPPPNVTGILHMGHVLNNSIQDTLIRYNRMTGKNTLWMPGCDHAGIATQNKVERKLAEDGLKKEDIGREKFLEMTWDWKEKYGGIITKQLRKLGASLDWDRERFTMDEGLSYAVRKIFNDLYHDGLIYQGEYMVNWCPSCGTALADDEVDHEEKDGHLWQIKYPVKDSDEYIIIATSRPETMLADVAVAVHPEDERYKHLIGKTLILPLVNREIPVIADEYVDKEFGTGALKITPAHDPNDYNLGKKYNLPIINMLTPDGKIVEDYPKYAGLDRFEARKKIVEDLKAQDLFIKTEHLHHAVGQCYRCQTVIEPRVSPQWFVKMKPLAEKALEVVRNGEVKILPKRMEKIYYNWLENIRDWCISRQIWWGHRIPAWYGPDRHVFVAMDEAEAKEQAKKHYGHDVELSQEEDVLDTWFSSALWPFSTMGWPEKTKELDLFYPTNTLVTGADIIFFWVARMIMFGMYELKKIPFKNVFFHGIVRDEIGRKMSKSLGNSPDPLDLIKEYGVDAIRFSMIYNTSQGQDVHFSTDLLGMGRNFANKIWNATRFVIMNLKGFDVKSVDKTKLDYELVDKWIISRLNETAKDVKDCLEKFELDNAAKAVYEFLRGDFCDWYVEIAKIRLYNDDEDKKISKLTAQYMLWTILEQGLRLLHPFMPFITEEIWQKIKVDGDTIMLQQYPVADDSLIDVKIEKSFEYIKEVVSSLRNIRAEKGISPAKPAKVVVSTSNSEELETLEKNELFIKKLANLEELTCGTDLEAPSQSSLRVAGNSSVYMILTGLLNNEAEIKKINEQLAKLEKELEPVNRKLSDEKFTSKAPQHIIDRELRIQKEYQDKIKKLKESLKSFEE</sequence>
<gene>
    <name evidence="1" type="primary">valS</name>
    <name type="ordered locus">FN2011</name>
</gene>
<dbReference type="EC" id="6.1.1.9" evidence="1"/>
<dbReference type="EMBL" id="AE009951">
    <property type="protein sequence ID" value="AAL94101.1"/>
    <property type="molecule type" value="Genomic_DNA"/>
</dbReference>
<dbReference type="RefSeq" id="NP_602802.1">
    <property type="nucleotide sequence ID" value="NC_003454.1"/>
</dbReference>
<dbReference type="RefSeq" id="WP_011015981.1">
    <property type="nucleotide sequence ID" value="NZ_CP028101.1"/>
</dbReference>
<dbReference type="SMR" id="Q8RHK3"/>
<dbReference type="FunCoup" id="Q8RHK3">
    <property type="interactions" value="371"/>
</dbReference>
<dbReference type="STRING" id="190304.FN2011"/>
<dbReference type="PaxDb" id="190304-FN2011"/>
<dbReference type="EnsemblBacteria" id="AAL94101">
    <property type="protein sequence ID" value="AAL94101"/>
    <property type="gene ID" value="FN2011"/>
</dbReference>
<dbReference type="GeneID" id="79782982"/>
<dbReference type="KEGG" id="fnu:FN2011"/>
<dbReference type="PATRIC" id="fig|190304.8.peg.479"/>
<dbReference type="eggNOG" id="COG0525">
    <property type="taxonomic scope" value="Bacteria"/>
</dbReference>
<dbReference type="HOGENOM" id="CLU_001493_0_2_0"/>
<dbReference type="InParanoid" id="Q8RHK3"/>
<dbReference type="BioCyc" id="FNUC190304:G1FZS-498-MONOMER"/>
<dbReference type="Proteomes" id="UP000002521">
    <property type="component" value="Chromosome"/>
</dbReference>
<dbReference type="GO" id="GO:0005829">
    <property type="term" value="C:cytosol"/>
    <property type="evidence" value="ECO:0000318"/>
    <property type="project" value="GO_Central"/>
</dbReference>
<dbReference type="GO" id="GO:0002161">
    <property type="term" value="F:aminoacyl-tRNA deacylase activity"/>
    <property type="evidence" value="ECO:0007669"/>
    <property type="project" value="InterPro"/>
</dbReference>
<dbReference type="GO" id="GO:0005524">
    <property type="term" value="F:ATP binding"/>
    <property type="evidence" value="ECO:0007669"/>
    <property type="project" value="UniProtKB-UniRule"/>
</dbReference>
<dbReference type="GO" id="GO:0004832">
    <property type="term" value="F:valine-tRNA ligase activity"/>
    <property type="evidence" value="ECO:0000318"/>
    <property type="project" value="GO_Central"/>
</dbReference>
<dbReference type="GO" id="GO:0006438">
    <property type="term" value="P:valyl-tRNA aminoacylation"/>
    <property type="evidence" value="ECO:0000318"/>
    <property type="project" value="GO_Central"/>
</dbReference>
<dbReference type="CDD" id="cd07962">
    <property type="entry name" value="Anticodon_Ia_Val"/>
    <property type="match status" value="1"/>
</dbReference>
<dbReference type="CDD" id="cd00817">
    <property type="entry name" value="ValRS_core"/>
    <property type="match status" value="1"/>
</dbReference>
<dbReference type="FunFam" id="1.10.287.380:FF:000001">
    <property type="entry name" value="Valine--tRNA ligase"/>
    <property type="match status" value="1"/>
</dbReference>
<dbReference type="FunFam" id="1.10.730.10:FF:000014">
    <property type="entry name" value="Valine--tRNA ligase"/>
    <property type="match status" value="1"/>
</dbReference>
<dbReference type="FunFam" id="3.40.50.620:FF:000032">
    <property type="entry name" value="Valine--tRNA ligase"/>
    <property type="match status" value="1"/>
</dbReference>
<dbReference type="FunFam" id="3.40.50.620:FF:000078">
    <property type="entry name" value="Valine--tRNA ligase, mitochondrial"/>
    <property type="match status" value="1"/>
</dbReference>
<dbReference type="FunFam" id="3.90.740.10:FF:000005">
    <property type="entry name" value="Valine--tRNA ligase, mitochondrial"/>
    <property type="match status" value="1"/>
</dbReference>
<dbReference type="Gene3D" id="3.40.50.620">
    <property type="entry name" value="HUPs"/>
    <property type="match status" value="2"/>
</dbReference>
<dbReference type="Gene3D" id="1.10.730.10">
    <property type="entry name" value="Isoleucyl-tRNA Synthetase, Domain 1"/>
    <property type="match status" value="1"/>
</dbReference>
<dbReference type="Gene3D" id="1.10.287.380">
    <property type="entry name" value="Valyl-tRNA synthetase, C-terminal domain"/>
    <property type="match status" value="1"/>
</dbReference>
<dbReference type="HAMAP" id="MF_02004">
    <property type="entry name" value="Val_tRNA_synth_type1"/>
    <property type="match status" value="1"/>
</dbReference>
<dbReference type="InterPro" id="IPR001412">
    <property type="entry name" value="aa-tRNA-synth_I_CS"/>
</dbReference>
<dbReference type="InterPro" id="IPR002300">
    <property type="entry name" value="aa-tRNA-synth_Ia"/>
</dbReference>
<dbReference type="InterPro" id="IPR033705">
    <property type="entry name" value="Anticodon_Ia_Val"/>
</dbReference>
<dbReference type="InterPro" id="IPR013155">
    <property type="entry name" value="M/V/L/I-tRNA-synth_anticd-bd"/>
</dbReference>
<dbReference type="InterPro" id="IPR014729">
    <property type="entry name" value="Rossmann-like_a/b/a_fold"/>
</dbReference>
<dbReference type="InterPro" id="IPR010978">
    <property type="entry name" value="tRNA-bd_arm"/>
</dbReference>
<dbReference type="InterPro" id="IPR009080">
    <property type="entry name" value="tRNAsynth_Ia_anticodon-bd"/>
</dbReference>
<dbReference type="InterPro" id="IPR037118">
    <property type="entry name" value="Val-tRNA_synth_C_sf"/>
</dbReference>
<dbReference type="InterPro" id="IPR019499">
    <property type="entry name" value="Val-tRNA_synth_tRNA-bd"/>
</dbReference>
<dbReference type="InterPro" id="IPR009008">
    <property type="entry name" value="Val/Leu/Ile-tRNA-synth_edit"/>
</dbReference>
<dbReference type="InterPro" id="IPR002303">
    <property type="entry name" value="Valyl-tRNA_ligase"/>
</dbReference>
<dbReference type="NCBIfam" id="NF004349">
    <property type="entry name" value="PRK05729.1"/>
    <property type="match status" value="1"/>
</dbReference>
<dbReference type="NCBIfam" id="TIGR00422">
    <property type="entry name" value="valS"/>
    <property type="match status" value="1"/>
</dbReference>
<dbReference type="PANTHER" id="PTHR11946:SF93">
    <property type="entry name" value="VALINE--TRNA LIGASE, CHLOROPLASTIC_MITOCHONDRIAL 2"/>
    <property type="match status" value="1"/>
</dbReference>
<dbReference type="PANTHER" id="PTHR11946">
    <property type="entry name" value="VALYL-TRNA SYNTHETASES"/>
    <property type="match status" value="1"/>
</dbReference>
<dbReference type="Pfam" id="PF08264">
    <property type="entry name" value="Anticodon_1"/>
    <property type="match status" value="1"/>
</dbReference>
<dbReference type="Pfam" id="PF00133">
    <property type="entry name" value="tRNA-synt_1"/>
    <property type="match status" value="1"/>
</dbReference>
<dbReference type="Pfam" id="PF10458">
    <property type="entry name" value="Val_tRNA-synt_C"/>
    <property type="match status" value="1"/>
</dbReference>
<dbReference type="PRINTS" id="PR00986">
    <property type="entry name" value="TRNASYNTHVAL"/>
</dbReference>
<dbReference type="SUPFAM" id="SSF47323">
    <property type="entry name" value="Anticodon-binding domain of a subclass of class I aminoacyl-tRNA synthetases"/>
    <property type="match status" value="1"/>
</dbReference>
<dbReference type="SUPFAM" id="SSF52374">
    <property type="entry name" value="Nucleotidylyl transferase"/>
    <property type="match status" value="1"/>
</dbReference>
<dbReference type="SUPFAM" id="SSF46589">
    <property type="entry name" value="tRNA-binding arm"/>
    <property type="match status" value="1"/>
</dbReference>
<dbReference type="SUPFAM" id="SSF50677">
    <property type="entry name" value="ValRS/IleRS/LeuRS editing domain"/>
    <property type="match status" value="1"/>
</dbReference>
<dbReference type="PROSITE" id="PS00178">
    <property type="entry name" value="AA_TRNA_LIGASE_I"/>
    <property type="match status" value="1"/>
</dbReference>
<protein>
    <recommendedName>
        <fullName evidence="1">Valine--tRNA ligase</fullName>
        <ecNumber evidence="1">6.1.1.9</ecNumber>
    </recommendedName>
    <alternativeName>
        <fullName evidence="1">Valyl-tRNA synthetase</fullName>
        <shortName evidence="1">ValRS</shortName>
    </alternativeName>
</protein>
<evidence type="ECO:0000255" key="1">
    <source>
        <dbReference type="HAMAP-Rule" id="MF_02004"/>
    </source>
</evidence>
<accession>Q8RHK3</accession>
<name>SYV_FUSNN</name>
<feature type="chain" id="PRO_0000224480" description="Valine--tRNA ligase">
    <location>
        <begin position="1"/>
        <end position="887"/>
    </location>
</feature>
<feature type="coiled-coil region" evidence="1">
    <location>
        <begin position="817"/>
        <end position="887"/>
    </location>
</feature>
<feature type="short sequence motif" description="'HIGH' region">
    <location>
        <begin position="45"/>
        <end position="55"/>
    </location>
</feature>
<feature type="short sequence motif" description="'KMSKS' region">
    <location>
        <begin position="528"/>
        <end position="532"/>
    </location>
</feature>
<feature type="binding site" evidence="1">
    <location>
        <position position="531"/>
    </location>
    <ligand>
        <name>ATP</name>
        <dbReference type="ChEBI" id="CHEBI:30616"/>
    </ligand>
</feature>
<reference key="1">
    <citation type="journal article" date="2002" name="J. Bacteriol.">
        <title>Genome sequence and analysis of the oral bacterium Fusobacterium nucleatum strain ATCC 25586.</title>
        <authorList>
            <person name="Kapatral V."/>
            <person name="Anderson I."/>
            <person name="Ivanova N."/>
            <person name="Reznik G."/>
            <person name="Los T."/>
            <person name="Lykidis A."/>
            <person name="Bhattacharyya A."/>
            <person name="Bartman A."/>
            <person name="Gardner W."/>
            <person name="Grechkin G."/>
            <person name="Zhu L."/>
            <person name="Vasieva O."/>
            <person name="Chu L."/>
            <person name="Kogan Y."/>
            <person name="Chaga O."/>
            <person name="Goltsman E."/>
            <person name="Bernal A."/>
            <person name="Larsen N."/>
            <person name="D'Souza M."/>
            <person name="Walunas T."/>
            <person name="Pusch G."/>
            <person name="Haselkorn R."/>
            <person name="Fonstein M."/>
            <person name="Kyrpides N.C."/>
            <person name="Overbeek R."/>
        </authorList>
    </citation>
    <scope>NUCLEOTIDE SEQUENCE [LARGE SCALE GENOMIC DNA]</scope>
    <source>
        <strain>ATCC 25586 / DSM 15643 / BCRC 10681 / CIP 101130 / JCM 8532 / KCTC 2640 / LMG 13131 / VPI 4355</strain>
    </source>
</reference>
<proteinExistence type="inferred from homology"/>
<comment type="function">
    <text evidence="1">Catalyzes the attachment of valine to tRNA(Val). As ValRS can inadvertently accommodate and process structurally similar amino acids such as threonine, to avoid such errors, it has a 'posttransfer' editing activity that hydrolyzes mischarged Thr-tRNA(Val) in a tRNA-dependent manner.</text>
</comment>
<comment type="catalytic activity">
    <reaction evidence="1">
        <text>tRNA(Val) + L-valine + ATP = L-valyl-tRNA(Val) + AMP + diphosphate</text>
        <dbReference type="Rhea" id="RHEA:10704"/>
        <dbReference type="Rhea" id="RHEA-COMP:9672"/>
        <dbReference type="Rhea" id="RHEA-COMP:9708"/>
        <dbReference type="ChEBI" id="CHEBI:30616"/>
        <dbReference type="ChEBI" id="CHEBI:33019"/>
        <dbReference type="ChEBI" id="CHEBI:57762"/>
        <dbReference type="ChEBI" id="CHEBI:78442"/>
        <dbReference type="ChEBI" id="CHEBI:78537"/>
        <dbReference type="ChEBI" id="CHEBI:456215"/>
        <dbReference type="EC" id="6.1.1.9"/>
    </reaction>
</comment>
<comment type="subunit">
    <text evidence="1">Monomer.</text>
</comment>
<comment type="subcellular location">
    <subcellularLocation>
        <location evidence="1">Cytoplasm</location>
    </subcellularLocation>
</comment>
<comment type="domain">
    <text evidence="1">ValRS has two distinct active sites: one for aminoacylation and one for editing. The misactivated threonine is translocated from the active site to the editing site.</text>
</comment>
<comment type="domain">
    <text evidence="1">The C-terminal coiled-coil domain is crucial for aminoacylation activity.</text>
</comment>
<comment type="similarity">
    <text evidence="1">Belongs to the class-I aminoacyl-tRNA synthetase family. ValS type 1 subfamily.</text>
</comment>
<organism>
    <name type="scientific">Fusobacterium nucleatum subsp. nucleatum (strain ATCC 25586 / DSM 15643 / BCRC 10681 / CIP 101130 / JCM 8532 / KCTC 2640 / LMG 13131 / VPI 4355)</name>
    <dbReference type="NCBI Taxonomy" id="190304"/>
    <lineage>
        <taxon>Bacteria</taxon>
        <taxon>Fusobacteriati</taxon>
        <taxon>Fusobacteriota</taxon>
        <taxon>Fusobacteriia</taxon>
        <taxon>Fusobacteriales</taxon>
        <taxon>Fusobacteriaceae</taxon>
        <taxon>Fusobacterium</taxon>
    </lineage>
</organism>